<proteinExistence type="inferred from homology"/>
<sequence length="344" mass="38843">MIDWVTAVLPCLHVPVDAGRVLSVAPDGSVEWESVKFSRVTGSFQSSISVRSQGSDGNGKATHLYVDGNPSKWLQGHNIVGSDDLNGLMIAFYARMLSLLNIPHHLESYRQVLSGQYELKRVDINYMFELPTLIDVRSWLHAAEFKAKTRHGRPATAKGTLYFGKNSRRWSIKAYSKYDEVNCGKKAHGVPEEIKKTGLVEWSKNKLRLELTLRALQLTDINLNFAKNWSTETAYTVFKEYMGRIEMSGNTLLTDTQVINLPSALRMTYVCWKQGICVTDMVSRATYFRHRKVLKEFGIDIAVTVDRVDNSNVVPLIRVLEAKPASIPSQYDNLIFSSNRVSSF</sequence>
<evidence type="ECO:0000250" key="1"/>
<evidence type="ECO:0000305" key="2"/>
<protein>
    <recommendedName>
        <fullName>Replication-associated protein G2P</fullName>
        <shortName>Rep</shortName>
        <ecNumber>3.1.21.-</ecNumber>
        <ecNumber>6.5.1.1</ecNumber>
    </recommendedName>
    <alternativeName>
        <fullName>G2P</fullName>
    </alternativeName>
    <alternativeName>
        <fullName>Gene 2 protein</fullName>
    </alternativeName>
</protein>
<organism>
    <name type="scientific">Enterobacteria phage I2-2</name>
    <name type="common">Bacteriophage I2-2</name>
    <dbReference type="NCBI Taxonomy" id="10869"/>
    <lineage>
        <taxon>Viruses</taxon>
        <taxon>Monodnaviria</taxon>
        <taxon>Loebvirae</taxon>
        <taxon>Hofneiviricota</taxon>
        <taxon>Faserviricetes</taxon>
        <taxon>Tubulavirales</taxon>
        <taxon>Inoviridae</taxon>
        <taxon>Lineavirus</taxon>
    </lineage>
</organism>
<name>REP_BPI22</name>
<comment type="function">
    <text evidence="1">Isoform G2P plays an essential role in viral DNA replication. Binds the origin of replication and cleaves the dsDNA replicative form I (RFI) and becomes covalently bound to it via phosphotyrosine bond, generating the dsDNA replicative form II (RFII). In turn, viral DNA replication initiates at the 3'-OH of the cleavage site. After one round of rolling circle synthesis, protein G2P is linked to the newly synthesized ssDNA and joins the ends of the displaced strand to generate a circular single-stranded molecule ready to be packed into a virion.</text>
</comment>
<comment type="function">
    <text evidence="1">Isoform G10P protein binds to double-stranded DNA and prevents hydrolysis by nucleases. Additionally, G10P is an inhibitor of DNA replication and may have a role in the transition from semiconservative replicative form DNA replication to single-stranded DNA synthesis in the life cycle.</text>
</comment>
<comment type="catalytic activity">
    <reaction>
        <text>ATP + (deoxyribonucleotide)n-3'-hydroxyl + 5'-phospho-(deoxyribonucleotide)m = (deoxyribonucleotide)n+m + AMP + diphosphate.</text>
        <dbReference type="EC" id="6.5.1.1"/>
    </reaction>
</comment>
<comment type="alternative products">
    <event type="alternative initiation"/>
    <isoform>
        <id>P15419-1</id>
        <name>G2P</name>
        <name>Gene 2 protein</name>
        <sequence type="displayed"/>
    </isoform>
    <isoform>
        <id>P15419-2</id>
        <name>G10P</name>
        <name>Gene 10 protein</name>
        <sequence type="described" ref="VSP_018672"/>
    </isoform>
</comment>
<comment type="similarity">
    <text evidence="2">Belongs to the inovirus G2P protein family.</text>
</comment>
<reference key="1">
    <citation type="journal article" date="1992" name="J. Mol. Evol.">
        <title>Nucleotide sequence of the genome of the filamentous bacteriophage I2-2: module evolution of the filamentous phage genome.</title>
        <authorList>
            <person name="Stassen A.P."/>
            <person name="Schonmakers E.F."/>
            <person name="Yu M."/>
            <person name="Schoenmakers J.G."/>
            <person name="Konings R.N.H."/>
        </authorList>
    </citation>
    <scope>NUCLEOTIDE SEQUENCE [GENOMIC DNA]</scope>
</reference>
<organismHost>
    <name type="scientific">Escherichia coli</name>
    <dbReference type="NCBI Taxonomy" id="562"/>
</organismHost>
<accession>P15419</accession>
<dbReference type="EC" id="3.1.21.-"/>
<dbReference type="EC" id="6.5.1.1"/>
<dbReference type="EMBL" id="X14336">
    <property type="protein sequence ID" value="CAA32521.1"/>
    <property type="molecule type" value="Genomic_DNA"/>
</dbReference>
<dbReference type="EMBL" id="X14336">
    <property type="protein sequence ID" value="CAA32522.1"/>
    <property type="molecule type" value="Genomic_DNA"/>
</dbReference>
<dbReference type="PIR" id="S08085">
    <property type="entry name" value="S08085"/>
</dbReference>
<dbReference type="RefSeq" id="NP_039615.1">
    <molecule id="P15419-1"/>
    <property type="nucleotide sequence ID" value="NC_001332.1"/>
</dbReference>
<dbReference type="RefSeq" id="NP_039616.1">
    <molecule id="P15419-2"/>
    <property type="nucleotide sequence ID" value="NC_001332.1"/>
</dbReference>
<dbReference type="KEGG" id="vg:1260717"/>
<dbReference type="KEGG" id="vg:1260718"/>
<dbReference type="Proteomes" id="UP000000373">
    <property type="component" value="Genome"/>
</dbReference>
<dbReference type="GO" id="GO:0003677">
    <property type="term" value="F:DNA binding"/>
    <property type="evidence" value="ECO:0007669"/>
    <property type="project" value="UniProtKB-KW"/>
</dbReference>
<dbReference type="GO" id="GO:0003910">
    <property type="term" value="F:DNA ligase (ATP) activity"/>
    <property type="evidence" value="ECO:0007669"/>
    <property type="project" value="UniProtKB-EC"/>
</dbReference>
<dbReference type="GO" id="GO:0004519">
    <property type="term" value="F:endonuclease activity"/>
    <property type="evidence" value="ECO:0007669"/>
    <property type="project" value="UniProtKB-KW"/>
</dbReference>
<dbReference type="GO" id="GO:0006260">
    <property type="term" value="P:DNA replication"/>
    <property type="evidence" value="ECO:0007669"/>
    <property type="project" value="UniProtKB-KW"/>
</dbReference>
<dbReference type="InterPro" id="IPR006516">
    <property type="entry name" value="G2P"/>
</dbReference>
<dbReference type="InterPro" id="IPR022688">
    <property type="entry name" value="G2P_C"/>
</dbReference>
<dbReference type="InterPro" id="IPR022686">
    <property type="entry name" value="G2P_N"/>
</dbReference>
<dbReference type="NCBIfam" id="TIGR01629">
    <property type="entry name" value="rep_II_X"/>
    <property type="match status" value="1"/>
</dbReference>
<dbReference type="Pfam" id="PF05155">
    <property type="entry name" value="G2P_X_C"/>
    <property type="match status" value="1"/>
</dbReference>
<dbReference type="Pfam" id="PF05144">
    <property type="entry name" value="Phage_CRI"/>
    <property type="match status" value="1"/>
</dbReference>
<feature type="chain" id="PRO_0000003309" description="Replication-associated protein G2P">
    <location>
        <begin position="1"/>
        <end position="344"/>
    </location>
</feature>
<feature type="splice variant" id="VSP_018672" description="In isoform G10P." evidence="2">
    <location>
        <begin position="1"/>
        <end position="246"/>
    </location>
</feature>
<gene>
    <name type="primary">II</name>
</gene>
<keyword id="KW-0024">Alternative initiation</keyword>
<keyword id="KW-0235">DNA replication</keyword>
<keyword id="KW-0238">DNA-binding</keyword>
<keyword id="KW-0255">Endonuclease</keyword>
<keyword id="KW-0378">Hydrolase</keyword>
<keyword id="KW-0436">Ligase</keyword>
<keyword id="KW-0540">Nuclease</keyword>
<keyword id="KW-1185">Reference proteome</keyword>